<feature type="chain" id="PRO_1000090049" description="Glutamate--tRNA ligase">
    <location>
        <begin position="1"/>
        <end position="479"/>
    </location>
</feature>
<feature type="short sequence motif" description="'HIGH' region" evidence="1">
    <location>
        <begin position="21"/>
        <end position="31"/>
    </location>
</feature>
<feature type="short sequence motif" description="'KMSKS' region" evidence="1">
    <location>
        <begin position="248"/>
        <end position="252"/>
    </location>
</feature>
<feature type="binding site" evidence="1">
    <location>
        <position position="251"/>
    </location>
    <ligand>
        <name>ATP</name>
        <dbReference type="ChEBI" id="CHEBI:30616"/>
    </ligand>
</feature>
<comment type="function">
    <text evidence="1">Catalyzes the attachment of glutamate to tRNA(Glu) in a two-step reaction: glutamate is first activated by ATP to form Glu-AMP and then transferred to the acceptor end of tRNA(Glu).</text>
</comment>
<comment type="catalytic activity">
    <reaction evidence="1">
        <text>tRNA(Glu) + L-glutamate + ATP = L-glutamyl-tRNA(Glu) + AMP + diphosphate</text>
        <dbReference type="Rhea" id="RHEA:23540"/>
        <dbReference type="Rhea" id="RHEA-COMP:9663"/>
        <dbReference type="Rhea" id="RHEA-COMP:9680"/>
        <dbReference type="ChEBI" id="CHEBI:29985"/>
        <dbReference type="ChEBI" id="CHEBI:30616"/>
        <dbReference type="ChEBI" id="CHEBI:33019"/>
        <dbReference type="ChEBI" id="CHEBI:78442"/>
        <dbReference type="ChEBI" id="CHEBI:78520"/>
        <dbReference type="ChEBI" id="CHEBI:456215"/>
        <dbReference type="EC" id="6.1.1.17"/>
    </reaction>
</comment>
<comment type="subunit">
    <text evidence="1">Monomer.</text>
</comment>
<comment type="subcellular location">
    <subcellularLocation>
        <location evidence="1">Cytoplasm</location>
    </subcellularLocation>
</comment>
<comment type="similarity">
    <text evidence="1">Belongs to the class-I aminoacyl-tRNA synthetase family. Glutamate--tRNA ligase type 1 subfamily.</text>
</comment>
<name>SYE_ACTP7</name>
<accession>B3H248</accession>
<keyword id="KW-0030">Aminoacyl-tRNA synthetase</keyword>
<keyword id="KW-0067">ATP-binding</keyword>
<keyword id="KW-0963">Cytoplasm</keyword>
<keyword id="KW-0436">Ligase</keyword>
<keyword id="KW-0547">Nucleotide-binding</keyword>
<keyword id="KW-0648">Protein biosynthesis</keyword>
<reference key="1">
    <citation type="submission" date="2008-06" db="EMBL/GenBank/DDBJ databases">
        <title>Genome and proteome analysis of A. pleuropneumoniae serotype 7.</title>
        <authorList>
            <person name="Linke B."/>
            <person name="Buettner F."/>
            <person name="Martinez-Arias R."/>
            <person name="Goesmann A."/>
            <person name="Baltes N."/>
            <person name="Tegetmeyer H."/>
            <person name="Singh M."/>
            <person name="Gerlach G.F."/>
        </authorList>
    </citation>
    <scope>NUCLEOTIDE SEQUENCE [LARGE SCALE GENOMIC DNA]</scope>
    <source>
        <strain>AP76</strain>
    </source>
</reference>
<protein>
    <recommendedName>
        <fullName evidence="1">Glutamate--tRNA ligase</fullName>
        <ecNumber evidence="1">6.1.1.17</ecNumber>
    </recommendedName>
    <alternativeName>
        <fullName evidence="1">Glutamyl-tRNA synthetase</fullName>
        <shortName evidence="1">GluRS</shortName>
    </alternativeName>
</protein>
<dbReference type="EC" id="6.1.1.17" evidence="1"/>
<dbReference type="EMBL" id="CP001091">
    <property type="protein sequence ID" value="ACE61978.1"/>
    <property type="molecule type" value="Genomic_DNA"/>
</dbReference>
<dbReference type="RefSeq" id="WP_005605060.1">
    <property type="nucleotide sequence ID" value="NC_010939.1"/>
</dbReference>
<dbReference type="SMR" id="B3H248"/>
<dbReference type="KEGG" id="apa:APP7_1326"/>
<dbReference type="HOGENOM" id="CLU_015768_6_0_6"/>
<dbReference type="Proteomes" id="UP000001226">
    <property type="component" value="Chromosome"/>
</dbReference>
<dbReference type="GO" id="GO:0005829">
    <property type="term" value="C:cytosol"/>
    <property type="evidence" value="ECO:0007669"/>
    <property type="project" value="TreeGrafter"/>
</dbReference>
<dbReference type="GO" id="GO:0005524">
    <property type="term" value="F:ATP binding"/>
    <property type="evidence" value="ECO:0007669"/>
    <property type="project" value="UniProtKB-UniRule"/>
</dbReference>
<dbReference type="GO" id="GO:0004818">
    <property type="term" value="F:glutamate-tRNA ligase activity"/>
    <property type="evidence" value="ECO:0007669"/>
    <property type="project" value="UniProtKB-UniRule"/>
</dbReference>
<dbReference type="GO" id="GO:0000049">
    <property type="term" value="F:tRNA binding"/>
    <property type="evidence" value="ECO:0007669"/>
    <property type="project" value="InterPro"/>
</dbReference>
<dbReference type="GO" id="GO:0008270">
    <property type="term" value="F:zinc ion binding"/>
    <property type="evidence" value="ECO:0007669"/>
    <property type="project" value="InterPro"/>
</dbReference>
<dbReference type="GO" id="GO:0006424">
    <property type="term" value="P:glutamyl-tRNA aminoacylation"/>
    <property type="evidence" value="ECO:0007669"/>
    <property type="project" value="UniProtKB-UniRule"/>
</dbReference>
<dbReference type="CDD" id="cd00808">
    <property type="entry name" value="GluRS_core"/>
    <property type="match status" value="1"/>
</dbReference>
<dbReference type="FunFam" id="3.40.50.620:FF:000007">
    <property type="entry name" value="Glutamate--tRNA ligase"/>
    <property type="match status" value="1"/>
</dbReference>
<dbReference type="Gene3D" id="1.10.10.350">
    <property type="match status" value="1"/>
</dbReference>
<dbReference type="Gene3D" id="3.40.50.620">
    <property type="entry name" value="HUPs"/>
    <property type="match status" value="1"/>
</dbReference>
<dbReference type="HAMAP" id="MF_00022">
    <property type="entry name" value="Glu_tRNA_synth_type1"/>
    <property type="match status" value="1"/>
</dbReference>
<dbReference type="InterPro" id="IPR045462">
    <property type="entry name" value="aa-tRNA-synth_I_cd-bd"/>
</dbReference>
<dbReference type="InterPro" id="IPR020751">
    <property type="entry name" value="aa-tRNA-synth_I_codon-bd_sub2"/>
</dbReference>
<dbReference type="InterPro" id="IPR001412">
    <property type="entry name" value="aa-tRNA-synth_I_CS"/>
</dbReference>
<dbReference type="InterPro" id="IPR008925">
    <property type="entry name" value="aa_tRNA-synth_I_cd-bd_sf"/>
</dbReference>
<dbReference type="InterPro" id="IPR004527">
    <property type="entry name" value="Glu-tRNA-ligase_bac/mito"/>
</dbReference>
<dbReference type="InterPro" id="IPR000924">
    <property type="entry name" value="Glu/Gln-tRNA-synth"/>
</dbReference>
<dbReference type="InterPro" id="IPR020058">
    <property type="entry name" value="Glu/Gln-tRNA-synth_Ib_cat-dom"/>
</dbReference>
<dbReference type="InterPro" id="IPR049940">
    <property type="entry name" value="GluQ/Sye"/>
</dbReference>
<dbReference type="InterPro" id="IPR033910">
    <property type="entry name" value="GluRS_core"/>
</dbReference>
<dbReference type="InterPro" id="IPR014729">
    <property type="entry name" value="Rossmann-like_a/b/a_fold"/>
</dbReference>
<dbReference type="NCBIfam" id="TIGR00464">
    <property type="entry name" value="gltX_bact"/>
    <property type="match status" value="1"/>
</dbReference>
<dbReference type="PANTHER" id="PTHR43311">
    <property type="entry name" value="GLUTAMATE--TRNA LIGASE"/>
    <property type="match status" value="1"/>
</dbReference>
<dbReference type="PANTHER" id="PTHR43311:SF2">
    <property type="entry name" value="GLUTAMATE--TRNA LIGASE, MITOCHONDRIAL-RELATED"/>
    <property type="match status" value="1"/>
</dbReference>
<dbReference type="Pfam" id="PF19269">
    <property type="entry name" value="Anticodon_2"/>
    <property type="match status" value="1"/>
</dbReference>
<dbReference type="Pfam" id="PF00749">
    <property type="entry name" value="tRNA-synt_1c"/>
    <property type="match status" value="1"/>
</dbReference>
<dbReference type="PRINTS" id="PR00987">
    <property type="entry name" value="TRNASYNTHGLU"/>
</dbReference>
<dbReference type="SUPFAM" id="SSF48163">
    <property type="entry name" value="An anticodon-binding domain of class I aminoacyl-tRNA synthetases"/>
    <property type="match status" value="1"/>
</dbReference>
<dbReference type="SUPFAM" id="SSF52374">
    <property type="entry name" value="Nucleotidylyl transferase"/>
    <property type="match status" value="1"/>
</dbReference>
<dbReference type="PROSITE" id="PS00178">
    <property type="entry name" value="AA_TRNA_LIGASE_I"/>
    <property type="match status" value="1"/>
</dbReference>
<gene>
    <name evidence="1" type="primary">gltX</name>
    <name type="ordered locus">APP7_1326</name>
</gene>
<sequence length="479" mass="54293">MNIETLFPLDPNVKVRTRFAPSPTGYLHVGGARTALYSWLYAKHFNGEFVLRIEDTDLERSTPEATAAILEGMEWLNLAWEHGPYYQTKRFDRYNQVIDQMIEQGLAYRCYCSKERLENLRHEQEANKEKPRYDRHCLAHHDQPTDAPHVVRFKNPQEGSVVFDDAVRGRIEISNSELDDLIIRRTDGSPTYNFCVVVDDWDMGITHVVRGEDHINNTPRQINILKALGAPIPTYAHVSMINGDDGQKLSKRHGAVSVMQYRDDGYLPEALINYLVRLGWGHGDQEIFSREEMIELFDIHSVSKSASAFNTDKLQWLNQHYMRSLPAEHVAKYLAWHMNDQAIDTSNGPALEEIIPVLSERAKTLKELAAASRYFYQEFDGYDEKAAAKNFKAEAVAPLAKLLEKLTALTDWSVEAIHDAMNATAADLEIGMGKVGMPFRLAVTGSGQSPSMDITAKLVGRERTLARIQKAIEFIQAQA</sequence>
<organism>
    <name type="scientific">Actinobacillus pleuropneumoniae serotype 7 (strain AP76)</name>
    <dbReference type="NCBI Taxonomy" id="537457"/>
    <lineage>
        <taxon>Bacteria</taxon>
        <taxon>Pseudomonadati</taxon>
        <taxon>Pseudomonadota</taxon>
        <taxon>Gammaproteobacteria</taxon>
        <taxon>Pasteurellales</taxon>
        <taxon>Pasteurellaceae</taxon>
        <taxon>Actinobacillus</taxon>
    </lineage>
</organism>
<proteinExistence type="inferred from homology"/>
<evidence type="ECO:0000255" key="1">
    <source>
        <dbReference type="HAMAP-Rule" id="MF_00022"/>
    </source>
</evidence>